<sequence length="295" mass="35024">MEVLDKAVNGYIDHLLGPKDPRVKGWLLLDNYVPTIFFTALYLFIVWRGPKYMQNRQPVSCRSILVVYNLGLTLLSFYMFYELVTGVWEGGYNFFCQDTHSGGDADTKIIRVLWWYYFSKLIEFMDTFFFILRKNNHQITVLHVYHHASMLNIWWFVMNWVPCGHSFFGATLNSFIHVLMYSYYGLSAIPAIRPYLWWKKYITQCQLTQFVLTMTQTTCAMIWPCKFPMGWLYFQNSYMISLIILFTNFYLKTYNKKTSSRRKEYQNGSASAVNGYTNSFSSLEDNVKQRKQRQN</sequence>
<organism>
    <name type="scientific">Xenopus laevis</name>
    <name type="common">African clawed frog</name>
    <dbReference type="NCBI Taxonomy" id="8355"/>
    <lineage>
        <taxon>Eukaryota</taxon>
        <taxon>Metazoa</taxon>
        <taxon>Chordata</taxon>
        <taxon>Craniata</taxon>
        <taxon>Vertebrata</taxon>
        <taxon>Euteleostomi</taxon>
        <taxon>Amphibia</taxon>
        <taxon>Batrachia</taxon>
        <taxon>Anura</taxon>
        <taxon>Pipoidea</taxon>
        <taxon>Pipidae</taxon>
        <taxon>Xenopodinae</taxon>
        <taxon>Xenopus</taxon>
        <taxon>Xenopus</taxon>
    </lineage>
</organism>
<comment type="function">
    <text evidence="1 3">Catalyzes the first and rate-limiting reaction of the four reactions that constitute the long-chain fatty acids elongation cycle. This endoplasmic reticulum-bound enzymatic process allows the addition of 2 carbons to the chain of long- and very long-chain fatty acids (VLCFAs) per cycle. Condensing enzyme that acts specifically toward polyunsaturated acyl-CoA with the higher activity toward C18:3(n-6) acyl-CoA. May participate in the production of monounsaturated and of polyunsaturated VLCFAs of different chain lengths that are involved in multiple biological processes as precursors of membrane lipids and lipid mediators (By similarity). In conditions where the essential linoleic and alpha linoleic fatty acids are lacking it is also involved in the synthesis of Mead acid from oleic acid (By similarity).</text>
</comment>
<comment type="catalytic activity">
    <reaction evidence="3">
        <text>a very-long-chain acyl-CoA + malonyl-CoA + H(+) = a very-long-chain 3-oxoacyl-CoA + CO2 + CoA</text>
        <dbReference type="Rhea" id="RHEA:32727"/>
        <dbReference type="ChEBI" id="CHEBI:15378"/>
        <dbReference type="ChEBI" id="CHEBI:16526"/>
        <dbReference type="ChEBI" id="CHEBI:57287"/>
        <dbReference type="ChEBI" id="CHEBI:57384"/>
        <dbReference type="ChEBI" id="CHEBI:90725"/>
        <dbReference type="ChEBI" id="CHEBI:90736"/>
        <dbReference type="EC" id="2.3.1.199"/>
    </reaction>
    <physiologicalReaction direction="left-to-right" evidence="2">
        <dbReference type="Rhea" id="RHEA:32728"/>
    </physiologicalReaction>
</comment>
<comment type="catalytic activity">
    <reaction evidence="2">
        <text>(6Z,9Z,12Z)-octadecatrienoyl-CoA + malonyl-CoA + H(+) = (8Z,11Z,14Z)-3-oxoeicosatrienoyl-CoA + CO2 + CoA</text>
        <dbReference type="Rhea" id="RHEA:35379"/>
        <dbReference type="ChEBI" id="CHEBI:15378"/>
        <dbReference type="ChEBI" id="CHEBI:16526"/>
        <dbReference type="ChEBI" id="CHEBI:57287"/>
        <dbReference type="ChEBI" id="CHEBI:57363"/>
        <dbReference type="ChEBI" id="CHEBI:57384"/>
        <dbReference type="ChEBI" id="CHEBI:71481"/>
    </reaction>
    <physiologicalReaction direction="left-to-right" evidence="2">
        <dbReference type="Rhea" id="RHEA:35380"/>
    </physiologicalReaction>
</comment>
<comment type="catalytic activity">
    <reaction evidence="2">
        <text>(9Z,12Z,15Z)-octadecatrienoyl-CoA + malonyl-CoA + H(+) = (11Z,14Z,17Z)-3-oxoeicosatrienoyl-CoA + CO2 + CoA</text>
        <dbReference type="Rhea" id="RHEA:36523"/>
        <dbReference type="ChEBI" id="CHEBI:15378"/>
        <dbReference type="ChEBI" id="CHEBI:16526"/>
        <dbReference type="ChEBI" id="CHEBI:57287"/>
        <dbReference type="ChEBI" id="CHEBI:57384"/>
        <dbReference type="ChEBI" id="CHEBI:74034"/>
        <dbReference type="ChEBI" id="CHEBI:74054"/>
    </reaction>
    <physiologicalReaction direction="left-to-right" evidence="2">
        <dbReference type="Rhea" id="RHEA:36524"/>
    </physiologicalReaction>
</comment>
<comment type="catalytic activity">
    <reaction evidence="2">
        <text>(9Z)-hexadecenoyl-CoA + malonyl-CoA + H(+) = 3-oxo-(11Z)-octadecenoyl-CoA + CO2 + CoA</text>
        <dbReference type="Rhea" id="RHEA:39675"/>
        <dbReference type="ChEBI" id="CHEBI:15378"/>
        <dbReference type="ChEBI" id="CHEBI:16526"/>
        <dbReference type="ChEBI" id="CHEBI:57287"/>
        <dbReference type="ChEBI" id="CHEBI:57384"/>
        <dbReference type="ChEBI" id="CHEBI:61540"/>
        <dbReference type="ChEBI" id="CHEBI:76555"/>
    </reaction>
    <physiologicalReaction direction="left-to-right" evidence="2">
        <dbReference type="Rhea" id="RHEA:39676"/>
    </physiologicalReaction>
</comment>
<comment type="catalytic activity">
    <reaction evidence="2">
        <text>(9Z)-octadecenoyl-CoA + malonyl-CoA + H(+) = 3-oxo-(11Z)-eicosenoyl-CoA + CO2 + CoA</text>
        <dbReference type="Rhea" id="RHEA:36511"/>
        <dbReference type="ChEBI" id="CHEBI:15378"/>
        <dbReference type="ChEBI" id="CHEBI:16526"/>
        <dbReference type="ChEBI" id="CHEBI:57287"/>
        <dbReference type="ChEBI" id="CHEBI:57384"/>
        <dbReference type="ChEBI" id="CHEBI:57387"/>
        <dbReference type="ChEBI" id="CHEBI:74011"/>
    </reaction>
    <physiologicalReaction direction="left-to-right" evidence="2">
        <dbReference type="Rhea" id="RHEA:36512"/>
    </physiologicalReaction>
</comment>
<comment type="catalytic activity">
    <reaction evidence="2">
        <text>(11Z)-octadecenoyl-CoA + malonyl-CoA + H(+) = 3-oxo-(13Z)-eicosenoyl-CoA + CO2 + CoA</text>
        <dbReference type="Rhea" id="RHEA:39679"/>
        <dbReference type="ChEBI" id="CHEBI:15378"/>
        <dbReference type="ChEBI" id="CHEBI:16526"/>
        <dbReference type="ChEBI" id="CHEBI:57287"/>
        <dbReference type="ChEBI" id="CHEBI:57384"/>
        <dbReference type="ChEBI" id="CHEBI:75121"/>
        <dbReference type="ChEBI" id="CHEBI:76559"/>
    </reaction>
    <physiologicalReaction direction="left-to-right" evidence="2">
        <dbReference type="Rhea" id="RHEA:39680"/>
    </physiologicalReaction>
</comment>
<comment type="catalytic activity">
    <reaction evidence="2">
        <text>(9Z,12Z)-octadecadienoyl-CoA + malonyl-CoA + H(+) = (11Z,14Z)-3-oxoicosa-11,14-dienoyl-CoA + CO2 + CoA</text>
        <dbReference type="Rhea" id="RHEA:36503"/>
        <dbReference type="ChEBI" id="CHEBI:15378"/>
        <dbReference type="ChEBI" id="CHEBI:16526"/>
        <dbReference type="ChEBI" id="CHEBI:57287"/>
        <dbReference type="ChEBI" id="CHEBI:57383"/>
        <dbReference type="ChEBI" id="CHEBI:57384"/>
        <dbReference type="ChEBI" id="CHEBI:74012"/>
    </reaction>
    <physiologicalReaction direction="left-to-right" evidence="2">
        <dbReference type="Rhea" id="RHEA:36504"/>
    </physiologicalReaction>
</comment>
<comment type="catalytic activity">
    <reaction evidence="2">
        <text>(6Z,9Z,12Z,15Z)-octadecatetraenoyl-CoA + malonyl-CoA + H(+) = (8Z,11Z,14Z,17Z)-3-oxoicosatetraenoyl-CoA + CO2 + CoA</text>
        <dbReference type="Rhea" id="RHEA:35391"/>
        <dbReference type="ChEBI" id="CHEBI:15378"/>
        <dbReference type="ChEBI" id="CHEBI:16526"/>
        <dbReference type="ChEBI" id="CHEBI:57287"/>
        <dbReference type="ChEBI" id="CHEBI:57384"/>
        <dbReference type="ChEBI" id="CHEBI:71489"/>
        <dbReference type="ChEBI" id="CHEBI:71491"/>
    </reaction>
    <physiologicalReaction direction="left-to-right" evidence="2">
        <dbReference type="Rhea" id="RHEA:35392"/>
    </physiologicalReaction>
</comment>
<comment type="catalytic activity">
    <reaction evidence="2">
        <text>(5Z,8Z,11Z,14Z)-eicosatetraenoyl-CoA + malonyl-CoA + H(+) = (7Z,10Z,13Z,16Z)-3-oxodocosatetraenoyl-CoA + CO2 + CoA</text>
        <dbReference type="Rhea" id="RHEA:36475"/>
        <dbReference type="ChEBI" id="CHEBI:15378"/>
        <dbReference type="ChEBI" id="CHEBI:16526"/>
        <dbReference type="ChEBI" id="CHEBI:57287"/>
        <dbReference type="ChEBI" id="CHEBI:57368"/>
        <dbReference type="ChEBI" id="CHEBI:57384"/>
        <dbReference type="ChEBI" id="CHEBI:73852"/>
    </reaction>
    <physiologicalReaction direction="left-to-right" evidence="2">
        <dbReference type="Rhea" id="RHEA:36476"/>
    </physiologicalReaction>
</comment>
<comment type="catalytic activity">
    <reaction evidence="2">
        <text>(5Z,8Z,11Z,14Z,17Z)-eicosapentaenoyl-CoA + malonyl-CoA + H(+) = 3-oxo-(7Z,10Z,13Z,16Z,19Z)-docosapentaenoyl-CoA + CO2 + CoA</text>
        <dbReference type="Rhea" id="RHEA:36483"/>
        <dbReference type="ChEBI" id="CHEBI:15378"/>
        <dbReference type="ChEBI" id="CHEBI:16526"/>
        <dbReference type="ChEBI" id="CHEBI:57287"/>
        <dbReference type="ChEBI" id="CHEBI:57384"/>
        <dbReference type="ChEBI" id="CHEBI:73862"/>
        <dbReference type="ChEBI" id="CHEBI:73863"/>
    </reaction>
    <physiologicalReaction direction="left-to-right" evidence="2">
        <dbReference type="Rhea" id="RHEA:36484"/>
    </physiologicalReaction>
</comment>
<comment type="pathway">
    <text evidence="3">Lipid metabolism; polyunsaturated fatty acid biosynthesis.</text>
</comment>
<comment type="subcellular location">
    <subcellularLocation>
        <location evidence="3">Endoplasmic reticulum membrane</location>
        <topology evidence="3">Multi-pass membrane protein</topology>
    </subcellularLocation>
    <subcellularLocation>
        <location evidence="3">Cell projection</location>
        <location evidence="3">Dendrite</location>
    </subcellularLocation>
    <text evidence="3">In Purkinje cells, the protein localizes to the soma and proximal portion of the dendritic tree.</text>
</comment>
<comment type="similarity">
    <text evidence="3">Belongs to the ELO family. ELOVL5 subfamily.</text>
</comment>
<gene>
    <name evidence="3" type="primary">elovl5</name>
</gene>
<keyword id="KW-0966">Cell projection</keyword>
<keyword id="KW-0256">Endoplasmic reticulum</keyword>
<keyword id="KW-0275">Fatty acid biosynthesis</keyword>
<keyword id="KW-0276">Fatty acid metabolism</keyword>
<keyword id="KW-0444">Lipid biosynthesis</keyword>
<keyword id="KW-0443">Lipid metabolism</keyword>
<keyword id="KW-0472">Membrane</keyword>
<keyword id="KW-1185">Reference proteome</keyword>
<keyword id="KW-0808">Transferase</keyword>
<keyword id="KW-0812">Transmembrane</keyword>
<keyword id="KW-1133">Transmembrane helix</keyword>
<protein>
    <recommendedName>
        <fullName evidence="3">Very long chain fatty acid elongase 5</fullName>
        <ecNumber evidence="2 3">2.3.1.199</ecNumber>
    </recommendedName>
    <alternativeName>
        <fullName evidence="3">3-keto acyl-CoA synthase elovl5</fullName>
    </alternativeName>
    <alternativeName>
        <fullName evidence="3">ELOVL fatty acid elongase 5</fullName>
        <shortName evidence="3">ELOVL FA elongase 5</shortName>
    </alternativeName>
    <alternativeName>
        <fullName evidence="3">Elongation of very long chain fatty acids protein 5</fullName>
    </alternativeName>
    <alternativeName>
        <fullName evidence="3">Very long chain 3-ketoacyl-CoA synthase 5</fullName>
    </alternativeName>
    <alternativeName>
        <fullName evidence="3">Very long chain 3-oxoacyl-CoA synthase 5</fullName>
    </alternativeName>
</protein>
<accession>Q32NI8</accession>
<evidence type="ECO:0000250" key="1">
    <source>
        <dbReference type="UniProtKB" id="Q8BHI7"/>
    </source>
</evidence>
<evidence type="ECO:0000250" key="2">
    <source>
        <dbReference type="UniProtKB" id="Q9NYP7"/>
    </source>
</evidence>
<evidence type="ECO:0000255" key="3">
    <source>
        <dbReference type="HAMAP-Rule" id="MF_03205"/>
    </source>
</evidence>
<evidence type="ECO:0000256" key="4">
    <source>
        <dbReference type="SAM" id="MobiDB-lite"/>
    </source>
</evidence>
<proteinExistence type="evidence at transcript level"/>
<feature type="chain" id="PRO_0000282843" description="Very long chain fatty acid elongase 5">
    <location>
        <begin position="1"/>
        <end position="295"/>
    </location>
</feature>
<feature type="transmembrane region" description="Helical" evidence="3">
    <location>
        <begin position="26"/>
        <end position="46"/>
    </location>
</feature>
<feature type="transmembrane region" description="Helical" evidence="3">
    <location>
        <begin position="64"/>
        <end position="84"/>
    </location>
</feature>
<feature type="transmembrane region" description="Helical" evidence="3">
    <location>
        <begin position="112"/>
        <end position="132"/>
    </location>
</feature>
<feature type="transmembrane region" description="Helical" evidence="3">
    <location>
        <begin position="150"/>
        <end position="170"/>
    </location>
</feature>
<feature type="transmembrane region" description="Helical" evidence="3">
    <location>
        <begin position="172"/>
        <end position="192"/>
    </location>
</feature>
<feature type="transmembrane region" description="Helical" evidence="3">
    <location>
        <begin position="207"/>
        <end position="223"/>
    </location>
</feature>
<feature type="transmembrane region" description="Helical" evidence="3">
    <location>
        <begin position="227"/>
        <end position="247"/>
    </location>
</feature>
<feature type="region of interest" description="Disordered" evidence="4">
    <location>
        <begin position="265"/>
        <end position="295"/>
    </location>
</feature>
<feature type="compositionally biased region" description="Polar residues" evidence="4">
    <location>
        <begin position="266"/>
        <end position="284"/>
    </location>
</feature>
<dbReference type="EC" id="2.3.1.199" evidence="2 3"/>
<dbReference type="EMBL" id="BC108603">
    <property type="protein sequence ID" value="AAI08604.1"/>
    <property type="molecule type" value="mRNA"/>
</dbReference>
<dbReference type="RefSeq" id="NP_001089883.1">
    <property type="nucleotide sequence ID" value="NM_001096414.1"/>
</dbReference>
<dbReference type="SMR" id="Q32NI8"/>
<dbReference type="DNASU" id="734950"/>
<dbReference type="GeneID" id="734950"/>
<dbReference type="KEGG" id="xla:734950"/>
<dbReference type="AGR" id="Xenbase:XB-GENE-952352"/>
<dbReference type="CTD" id="734950"/>
<dbReference type="Xenbase" id="XB-GENE-952352">
    <property type="gene designation" value="elovl5.S"/>
</dbReference>
<dbReference type="OMA" id="CRFPMGW"/>
<dbReference type="OrthoDB" id="434092at2759"/>
<dbReference type="UniPathway" id="UPA00658"/>
<dbReference type="Proteomes" id="UP000186698">
    <property type="component" value="Chromosome 5S"/>
</dbReference>
<dbReference type="Bgee" id="734950">
    <property type="expression patterns" value="Expressed in intestine and 19 other cell types or tissues"/>
</dbReference>
<dbReference type="GO" id="GO:0030425">
    <property type="term" value="C:dendrite"/>
    <property type="evidence" value="ECO:0007669"/>
    <property type="project" value="UniProtKB-SubCell"/>
</dbReference>
<dbReference type="GO" id="GO:0097447">
    <property type="term" value="C:dendritic tree"/>
    <property type="evidence" value="ECO:0000250"/>
    <property type="project" value="UniProtKB"/>
</dbReference>
<dbReference type="GO" id="GO:0005789">
    <property type="term" value="C:endoplasmic reticulum membrane"/>
    <property type="evidence" value="ECO:0000318"/>
    <property type="project" value="GO_Central"/>
</dbReference>
<dbReference type="GO" id="GO:0043025">
    <property type="term" value="C:neuronal cell body"/>
    <property type="evidence" value="ECO:0000250"/>
    <property type="project" value="UniProtKB"/>
</dbReference>
<dbReference type="GO" id="GO:0009922">
    <property type="term" value="F:fatty acid elongase activity"/>
    <property type="evidence" value="ECO:0000250"/>
    <property type="project" value="UniProtKB"/>
</dbReference>
<dbReference type="GO" id="GO:0034625">
    <property type="term" value="P:fatty acid elongation, monounsaturated fatty acid"/>
    <property type="evidence" value="ECO:0000318"/>
    <property type="project" value="GO_Central"/>
</dbReference>
<dbReference type="GO" id="GO:0034626">
    <property type="term" value="P:fatty acid elongation, polyunsaturated fatty acid"/>
    <property type="evidence" value="ECO:0000318"/>
    <property type="project" value="GO_Central"/>
</dbReference>
<dbReference type="GO" id="GO:0019367">
    <property type="term" value="P:fatty acid elongation, saturated fatty acid"/>
    <property type="evidence" value="ECO:0000318"/>
    <property type="project" value="GO_Central"/>
</dbReference>
<dbReference type="GO" id="GO:0035338">
    <property type="term" value="P:long-chain fatty-acyl-CoA biosynthetic process"/>
    <property type="evidence" value="ECO:0007669"/>
    <property type="project" value="UniProtKB-UniRule"/>
</dbReference>
<dbReference type="GO" id="GO:0030148">
    <property type="term" value="P:sphingolipid biosynthetic process"/>
    <property type="evidence" value="ECO:0000318"/>
    <property type="project" value="GO_Central"/>
</dbReference>
<dbReference type="GO" id="GO:0006636">
    <property type="term" value="P:unsaturated fatty acid biosynthetic process"/>
    <property type="evidence" value="ECO:0007669"/>
    <property type="project" value="UniProtKB-UniRule"/>
</dbReference>
<dbReference type="GO" id="GO:0042761">
    <property type="term" value="P:very long-chain fatty acid biosynthetic process"/>
    <property type="evidence" value="ECO:0000250"/>
    <property type="project" value="UniProtKB"/>
</dbReference>
<dbReference type="HAMAP" id="MF_03205">
    <property type="entry name" value="VLCF_elongase_5"/>
    <property type="match status" value="1"/>
</dbReference>
<dbReference type="InterPro" id="IPR002076">
    <property type="entry name" value="ELO_fam"/>
</dbReference>
<dbReference type="InterPro" id="IPR033677">
    <property type="entry name" value="ELOVL5"/>
</dbReference>
<dbReference type="PANTHER" id="PTHR11157:SF18">
    <property type="entry name" value="ELONGATION OF VERY LONG CHAIN FATTY ACIDS PROTEIN 5"/>
    <property type="match status" value="1"/>
</dbReference>
<dbReference type="PANTHER" id="PTHR11157">
    <property type="entry name" value="FATTY ACID ACYL TRANSFERASE-RELATED"/>
    <property type="match status" value="1"/>
</dbReference>
<dbReference type="Pfam" id="PF01151">
    <property type="entry name" value="ELO"/>
    <property type="match status" value="1"/>
</dbReference>
<reference key="1">
    <citation type="submission" date="2005-11" db="EMBL/GenBank/DDBJ databases">
        <authorList>
            <consortium name="NIH - Xenopus Gene Collection (XGC) project"/>
        </authorList>
    </citation>
    <scope>NUCLEOTIDE SEQUENCE [LARGE SCALE MRNA]</scope>
    <source>
        <tissue>Testis</tissue>
    </source>
</reference>
<name>ELOV5_XENLA</name>